<keyword id="KW-0227">DNA damage</keyword>
<keyword id="KW-0228">DNA excision</keyword>
<keyword id="KW-0234">DNA repair</keyword>
<keyword id="KW-0255">Endonuclease</keyword>
<keyword id="KW-0378">Hydrolase</keyword>
<keyword id="KW-0540">Nuclease</keyword>
<keyword id="KW-1185">Reference proteome</keyword>
<name>UVSE_CLOPE</name>
<organism>
    <name type="scientific">Clostridium perfringens (strain 13 / Type A)</name>
    <dbReference type="NCBI Taxonomy" id="195102"/>
    <lineage>
        <taxon>Bacteria</taxon>
        <taxon>Bacillati</taxon>
        <taxon>Bacillota</taxon>
        <taxon>Clostridia</taxon>
        <taxon>Eubacteriales</taxon>
        <taxon>Clostridiaceae</taxon>
        <taxon>Clostridium</taxon>
    </lineage>
</organism>
<accession>Q8XIP3</accession>
<comment type="function">
    <text evidence="1">Component in a DNA repair pathway. Removal of UV LIGHT damaged nucleotides. Recognizes pyrimidine dimers and cleave a phosphodiester bond immediately 5' to the lesion (By similarity).</text>
</comment>
<comment type="similarity">
    <text evidence="2">Belongs to the uve1/UvsE family.</text>
</comment>
<reference key="1">
    <citation type="journal article" date="2002" name="Proc. Natl. Acad. Sci. U.S.A.">
        <title>Complete genome sequence of Clostridium perfringens, an anaerobic flesh-eater.</title>
        <authorList>
            <person name="Shimizu T."/>
            <person name="Ohtani K."/>
            <person name="Hirakawa H."/>
            <person name="Ohshima K."/>
            <person name="Yamashita A."/>
            <person name="Shiba T."/>
            <person name="Ogasawara N."/>
            <person name="Hattori M."/>
            <person name="Kuhara S."/>
            <person name="Hayashi H."/>
        </authorList>
    </citation>
    <scope>NUCLEOTIDE SEQUENCE [LARGE SCALE GENOMIC DNA]</scope>
    <source>
        <strain>13 / Type A</strain>
    </source>
</reference>
<dbReference type="EC" id="3.-.-.-" evidence="2"/>
<dbReference type="EMBL" id="BA000016">
    <property type="protein sequence ID" value="BAB81778.1"/>
    <property type="molecule type" value="Genomic_DNA"/>
</dbReference>
<dbReference type="RefSeq" id="WP_011010747.1">
    <property type="nucleotide sequence ID" value="NC_003366.1"/>
</dbReference>
<dbReference type="SMR" id="Q8XIP3"/>
<dbReference type="STRING" id="195102.gene:10491342"/>
<dbReference type="KEGG" id="cpe:CPE2072"/>
<dbReference type="HOGENOM" id="CLU_017168_0_0_9"/>
<dbReference type="Proteomes" id="UP000000818">
    <property type="component" value="Chromosome"/>
</dbReference>
<dbReference type="GO" id="GO:0004519">
    <property type="term" value="F:endonuclease activity"/>
    <property type="evidence" value="ECO:0007669"/>
    <property type="project" value="UniProtKB-UniRule"/>
</dbReference>
<dbReference type="GO" id="GO:0006289">
    <property type="term" value="P:nucleotide-excision repair"/>
    <property type="evidence" value="ECO:0007669"/>
    <property type="project" value="InterPro"/>
</dbReference>
<dbReference type="GO" id="GO:0006290">
    <property type="term" value="P:pyrimidine dimer repair"/>
    <property type="evidence" value="ECO:0007669"/>
    <property type="project" value="UniProtKB-UniRule"/>
</dbReference>
<dbReference type="GO" id="GO:0009411">
    <property type="term" value="P:response to UV"/>
    <property type="evidence" value="ECO:0007669"/>
    <property type="project" value="InterPro"/>
</dbReference>
<dbReference type="Gene3D" id="3.20.20.150">
    <property type="entry name" value="Divalent-metal-dependent TIM barrel enzymes"/>
    <property type="match status" value="1"/>
</dbReference>
<dbReference type="HAMAP" id="MF_00606">
    <property type="entry name" value="UV_endonuclease"/>
    <property type="match status" value="1"/>
</dbReference>
<dbReference type="InterPro" id="IPR004601">
    <property type="entry name" value="UvdE"/>
</dbReference>
<dbReference type="InterPro" id="IPR023520">
    <property type="entry name" value="UvdE_bac"/>
</dbReference>
<dbReference type="InterPro" id="IPR036237">
    <property type="entry name" value="Xyl_isomerase-like_sf"/>
</dbReference>
<dbReference type="NCBIfam" id="TIGR00629">
    <property type="entry name" value="uvde"/>
    <property type="match status" value="1"/>
</dbReference>
<dbReference type="PANTHER" id="PTHR31290">
    <property type="entry name" value="UV-DAMAGE ENDONUCLEASE"/>
    <property type="match status" value="1"/>
</dbReference>
<dbReference type="PANTHER" id="PTHR31290:SF5">
    <property type="entry name" value="UV-DAMAGE ENDONUCLEASE"/>
    <property type="match status" value="1"/>
</dbReference>
<dbReference type="Pfam" id="PF03851">
    <property type="entry name" value="UvdE"/>
    <property type="match status" value="1"/>
</dbReference>
<dbReference type="SUPFAM" id="SSF51658">
    <property type="entry name" value="Xylose isomerase-like"/>
    <property type="match status" value="1"/>
</dbReference>
<sequence length="412" mass="48463">MKIGYACTPITTNARTNRRILLKDFSKDKFLSITKQNLDDLQKILEWNIKNNIYLFRIGSDIIPLGSHEINNISWQKEFKDKLETIGTFIKNNKIRVSMHPGQYTVINTPKEDVLYKSIKDIEYHCEFLDSLKVDYKNKIILHIGGVYGDKKLAKENFLKGFKKLSDSSKKRLVIENDERNFSLDDVLDISSKLNIPVIFDNLHNICYGDNSYSLKEIYSLVIKTWNKELDGNMKVHYSEQDIFKKKGSHSPSISINSFLEYYEEIKEFSPDIMLEVKDKDISAIKCINSLKEINKTLNSKAYREEIENYKLLLLQHDKDFQKKLNSFSKDLIEFYNYLDKLLLSPKDIIGFKYSLELAFNILKDRISNRESLYFKKLINEKEYEKAKVYLTKLVKKIEFPPKELSYYISQS</sequence>
<feature type="chain" id="PRO_0000215035" description="UV DNA damage endonuclease">
    <location>
        <begin position="1"/>
        <end position="412"/>
    </location>
</feature>
<evidence type="ECO:0000250" key="1"/>
<evidence type="ECO:0000255" key="2">
    <source>
        <dbReference type="HAMAP-Rule" id="MF_00606"/>
    </source>
</evidence>
<protein>
    <recommendedName>
        <fullName evidence="2">UV DNA damage endonuclease</fullName>
        <shortName evidence="2">UV-endonuclease</shortName>
        <shortName evidence="2">UVED</shortName>
        <ecNumber evidence="2">3.-.-.-</ecNumber>
    </recommendedName>
</protein>
<proteinExistence type="inferred from homology"/>
<gene>
    <name evidence="2" type="primary">uvsE</name>
    <name type="ordered locus">CPE2072</name>
</gene>